<feature type="chain" id="PRO_0000298943" description="Thyroid transcription factor 1-associated protein 26 homolog">
    <location>
        <begin position="1"/>
        <end position="256"/>
    </location>
</feature>
<feature type="region of interest" description="Disordered" evidence="1">
    <location>
        <begin position="1"/>
        <end position="35"/>
    </location>
</feature>
<feature type="region of interest" description="Disordered" evidence="1">
    <location>
        <begin position="72"/>
        <end position="190"/>
    </location>
</feature>
<feature type="compositionally biased region" description="Basic and acidic residues" evidence="1">
    <location>
        <begin position="89"/>
        <end position="104"/>
    </location>
</feature>
<feature type="compositionally biased region" description="Polar residues" evidence="1">
    <location>
        <begin position="136"/>
        <end position="185"/>
    </location>
</feature>
<proteinExistence type="inferred from homology"/>
<protein>
    <recommendedName>
        <fullName>Thyroid transcription factor 1-associated protein 26 homolog</fullName>
    </recommendedName>
</protein>
<organism>
    <name type="scientific">Danio rerio</name>
    <name type="common">Zebrafish</name>
    <name type="synonym">Brachydanio rerio</name>
    <dbReference type="NCBI Taxonomy" id="7955"/>
    <lineage>
        <taxon>Eukaryota</taxon>
        <taxon>Metazoa</taxon>
        <taxon>Chordata</taxon>
        <taxon>Craniata</taxon>
        <taxon>Vertebrata</taxon>
        <taxon>Euteleostomi</taxon>
        <taxon>Actinopterygii</taxon>
        <taxon>Neopterygii</taxon>
        <taxon>Teleostei</taxon>
        <taxon>Ostariophysi</taxon>
        <taxon>Cypriniformes</taxon>
        <taxon>Danionidae</taxon>
        <taxon>Danioninae</taxon>
        <taxon>Danio</taxon>
    </lineage>
</organism>
<evidence type="ECO:0000256" key="1">
    <source>
        <dbReference type="SAM" id="MobiDB-lite"/>
    </source>
</evidence>
<evidence type="ECO:0000305" key="2"/>
<reference key="1">
    <citation type="journal article" date="2013" name="Nature">
        <title>The zebrafish reference genome sequence and its relationship to the human genome.</title>
        <authorList>
            <person name="Howe K."/>
            <person name="Clark M.D."/>
            <person name="Torroja C.F."/>
            <person name="Torrance J."/>
            <person name="Berthelot C."/>
            <person name="Muffato M."/>
            <person name="Collins J.E."/>
            <person name="Humphray S."/>
            <person name="McLaren K."/>
            <person name="Matthews L."/>
            <person name="McLaren S."/>
            <person name="Sealy I."/>
            <person name="Caccamo M."/>
            <person name="Churcher C."/>
            <person name="Scott C."/>
            <person name="Barrett J.C."/>
            <person name="Koch R."/>
            <person name="Rauch G.J."/>
            <person name="White S."/>
            <person name="Chow W."/>
            <person name="Kilian B."/>
            <person name="Quintais L.T."/>
            <person name="Guerra-Assuncao J.A."/>
            <person name="Zhou Y."/>
            <person name="Gu Y."/>
            <person name="Yen J."/>
            <person name="Vogel J.H."/>
            <person name="Eyre T."/>
            <person name="Redmond S."/>
            <person name="Banerjee R."/>
            <person name="Chi J."/>
            <person name="Fu B."/>
            <person name="Langley E."/>
            <person name="Maguire S.F."/>
            <person name="Laird G.K."/>
            <person name="Lloyd D."/>
            <person name="Kenyon E."/>
            <person name="Donaldson S."/>
            <person name="Sehra H."/>
            <person name="Almeida-King J."/>
            <person name="Loveland J."/>
            <person name="Trevanion S."/>
            <person name="Jones M."/>
            <person name="Quail M."/>
            <person name="Willey D."/>
            <person name="Hunt A."/>
            <person name="Burton J."/>
            <person name="Sims S."/>
            <person name="McLay K."/>
            <person name="Plumb B."/>
            <person name="Davis J."/>
            <person name="Clee C."/>
            <person name="Oliver K."/>
            <person name="Clark R."/>
            <person name="Riddle C."/>
            <person name="Elliot D."/>
            <person name="Threadgold G."/>
            <person name="Harden G."/>
            <person name="Ware D."/>
            <person name="Begum S."/>
            <person name="Mortimore B."/>
            <person name="Kerry G."/>
            <person name="Heath P."/>
            <person name="Phillimore B."/>
            <person name="Tracey A."/>
            <person name="Corby N."/>
            <person name="Dunn M."/>
            <person name="Johnson C."/>
            <person name="Wood J."/>
            <person name="Clark S."/>
            <person name="Pelan S."/>
            <person name="Griffiths G."/>
            <person name="Smith M."/>
            <person name="Glithero R."/>
            <person name="Howden P."/>
            <person name="Barker N."/>
            <person name="Lloyd C."/>
            <person name="Stevens C."/>
            <person name="Harley J."/>
            <person name="Holt K."/>
            <person name="Panagiotidis G."/>
            <person name="Lovell J."/>
            <person name="Beasley H."/>
            <person name="Henderson C."/>
            <person name="Gordon D."/>
            <person name="Auger K."/>
            <person name="Wright D."/>
            <person name="Collins J."/>
            <person name="Raisen C."/>
            <person name="Dyer L."/>
            <person name="Leung K."/>
            <person name="Robertson L."/>
            <person name="Ambridge K."/>
            <person name="Leongamornlert D."/>
            <person name="McGuire S."/>
            <person name="Gilderthorp R."/>
            <person name="Griffiths C."/>
            <person name="Manthravadi D."/>
            <person name="Nichol S."/>
            <person name="Barker G."/>
            <person name="Whitehead S."/>
            <person name="Kay M."/>
            <person name="Brown J."/>
            <person name="Murnane C."/>
            <person name="Gray E."/>
            <person name="Humphries M."/>
            <person name="Sycamore N."/>
            <person name="Barker D."/>
            <person name="Saunders D."/>
            <person name="Wallis J."/>
            <person name="Babbage A."/>
            <person name="Hammond S."/>
            <person name="Mashreghi-Mohammadi M."/>
            <person name="Barr L."/>
            <person name="Martin S."/>
            <person name="Wray P."/>
            <person name="Ellington A."/>
            <person name="Matthews N."/>
            <person name="Ellwood M."/>
            <person name="Woodmansey R."/>
            <person name="Clark G."/>
            <person name="Cooper J."/>
            <person name="Tromans A."/>
            <person name="Grafham D."/>
            <person name="Skuce C."/>
            <person name="Pandian R."/>
            <person name="Andrews R."/>
            <person name="Harrison E."/>
            <person name="Kimberley A."/>
            <person name="Garnett J."/>
            <person name="Fosker N."/>
            <person name="Hall R."/>
            <person name="Garner P."/>
            <person name="Kelly D."/>
            <person name="Bird C."/>
            <person name="Palmer S."/>
            <person name="Gehring I."/>
            <person name="Berger A."/>
            <person name="Dooley C.M."/>
            <person name="Ersan-Urun Z."/>
            <person name="Eser C."/>
            <person name="Geiger H."/>
            <person name="Geisler M."/>
            <person name="Karotki L."/>
            <person name="Kirn A."/>
            <person name="Konantz J."/>
            <person name="Konantz M."/>
            <person name="Oberlander M."/>
            <person name="Rudolph-Geiger S."/>
            <person name="Teucke M."/>
            <person name="Lanz C."/>
            <person name="Raddatz G."/>
            <person name="Osoegawa K."/>
            <person name="Zhu B."/>
            <person name="Rapp A."/>
            <person name="Widaa S."/>
            <person name="Langford C."/>
            <person name="Yang F."/>
            <person name="Schuster S.C."/>
            <person name="Carter N.P."/>
            <person name="Harrow J."/>
            <person name="Ning Z."/>
            <person name="Herrero J."/>
            <person name="Searle S.M."/>
            <person name="Enright A."/>
            <person name="Geisler R."/>
            <person name="Plasterk R.H."/>
            <person name="Lee C."/>
            <person name="Westerfield M."/>
            <person name="de Jong P.J."/>
            <person name="Zon L.I."/>
            <person name="Postlethwait J.H."/>
            <person name="Nusslein-Volhard C."/>
            <person name="Hubbard T.J."/>
            <person name="Roest Crollius H."/>
            <person name="Rogers J."/>
            <person name="Stemple D.L."/>
        </authorList>
    </citation>
    <scope>NUCLEOTIDE SEQUENCE [LARGE SCALE GENOMIC DNA]</scope>
    <source>
        <strain>Tuebingen</strain>
    </source>
</reference>
<accession>Q5RGP9</accession>
<comment type="similarity">
    <text evidence="2">Belongs to the TAP26 family.</text>
</comment>
<keyword id="KW-1185">Reference proteome</keyword>
<sequence>MAPFKQNAKNKGPIRGKQFNNKFQRGGLSHNAKRKRKWVPEDKVFDGSLKEGQGFAFKRKEKVKHEYNKLLRKERKRKQESKVQLQEEYPEHLKHLYLAERERLDEEEQEKKKKRCKGRAVEEDIEEDDDKLNKDLGSSSSEKNITNTSTDQTIAPASSNEPAQPESSHKTTFFQRKQNISSYQKTKQEYERIKEERARKREEILKDKAQREEALKKYKEKKIATYQLLKRKTKKGQPNLNLQMELLLQKIQAQRK</sequence>
<name>TAP26_DANRE</name>
<dbReference type="EMBL" id="BX784029">
    <property type="protein sequence ID" value="CAI20940.1"/>
    <property type="molecule type" value="Genomic_DNA"/>
</dbReference>
<dbReference type="RefSeq" id="NP_001038519.1">
    <property type="nucleotide sequence ID" value="NM_001045054.1"/>
</dbReference>
<dbReference type="SMR" id="Q5RGP9"/>
<dbReference type="FunCoup" id="Q5RGP9">
    <property type="interactions" value="1499"/>
</dbReference>
<dbReference type="STRING" id="7955.ENSDARP00000119374"/>
<dbReference type="PaxDb" id="7955-ENSDARP00000119374"/>
<dbReference type="Ensembl" id="ENSDART00000140362">
    <property type="protein sequence ID" value="ENSDARP00000119374"/>
    <property type="gene ID" value="ENSDARG00000045755"/>
</dbReference>
<dbReference type="GeneID" id="564488"/>
<dbReference type="KEGG" id="dre:564488"/>
<dbReference type="AGR" id="ZFIN:ZDB-GENE-041210-91"/>
<dbReference type="CTD" id="29080"/>
<dbReference type="ZFIN" id="ZDB-GENE-041210-91">
    <property type="gene designation" value="ccdc59"/>
</dbReference>
<dbReference type="eggNOG" id="KOG3777">
    <property type="taxonomic scope" value="Eukaryota"/>
</dbReference>
<dbReference type="eggNOG" id="KOG4819">
    <property type="taxonomic scope" value="Eukaryota"/>
</dbReference>
<dbReference type="HOGENOM" id="CLU_101023_0_0_1"/>
<dbReference type="InParanoid" id="Q5RGP9"/>
<dbReference type="OMA" id="TDRYPDH"/>
<dbReference type="OrthoDB" id="5377144at2759"/>
<dbReference type="PhylomeDB" id="Q5RGP9"/>
<dbReference type="TreeFam" id="TF324429"/>
<dbReference type="PRO" id="PR:Q5RGP9"/>
<dbReference type="Proteomes" id="UP000000437">
    <property type="component" value="Chromosome 4"/>
</dbReference>
<dbReference type="Bgee" id="ENSDARG00000045755">
    <property type="expression patterns" value="Expressed in gastrula and 22 other cell types or tissues"/>
</dbReference>
<dbReference type="InterPro" id="IPR013730">
    <property type="entry name" value="Fyv7/TAP26"/>
</dbReference>
<dbReference type="PANTHER" id="PTHR15657">
    <property type="entry name" value="THYROID TRANSCRIPTION FACTOR 1-ASSOCIATED PROTEIN 26"/>
    <property type="match status" value="1"/>
</dbReference>
<dbReference type="PANTHER" id="PTHR15657:SF1">
    <property type="entry name" value="THYROID TRANSCRIPTION FACTOR 1-ASSOCIATED PROTEIN 26"/>
    <property type="match status" value="1"/>
</dbReference>
<dbReference type="Pfam" id="PF08524">
    <property type="entry name" value="rRNA_processing"/>
    <property type="match status" value="1"/>
</dbReference>
<dbReference type="PRINTS" id="PR01854">
    <property type="entry name" value="BR22PROTEIN"/>
</dbReference>
<gene>
    <name type="primary">ccdc59</name>
    <name type="ORF">si:dkey-21h14.2</name>
</gene>